<gene>
    <name type="primary">DDC</name>
</gene>
<comment type="function">
    <text evidence="4">Catalyzes the decarboxylation of L-3,4-dihydroxyphenylalanine (DOPA) to dopamine and L-5-hydroxytryptophan to serotonin.</text>
</comment>
<comment type="catalytic activity">
    <reaction evidence="4">
        <text>L-dopa + H(+) = dopamine + CO2</text>
        <dbReference type="Rhea" id="RHEA:12272"/>
        <dbReference type="ChEBI" id="CHEBI:15378"/>
        <dbReference type="ChEBI" id="CHEBI:16526"/>
        <dbReference type="ChEBI" id="CHEBI:57504"/>
        <dbReference type="ChEBI" id="CHEBI:59905"/>
        <dbReference type="EC" id="4.1.1.28"/>
    </reaction>
    <physiologicalReaction direction="left-to-right" evidence="4">
        <dbReference type="Rhea" id="RHEA:12273"/>
    </physiologicalReaction>
</comment>
<comment type="catalytic activity">
    <reaction evidence="4">
        <text>5-hydroxy-L-tryptophan + H(+) = serotonin + CO2</text>
        <dbReference type="Rhea" id="RHEA:18533"/>
        <dbReference type="ChEBI" id="CHEBI:15378"/>
        <dbReference type="ChEBI" id="CHEBI:16526"/>
        <dbReference type="ChEBI" id="CHEBI:58266"/>
        <dbReference type="ChEBI" id="CHEBI:350546"/>
        <dbReference type="EC" id="4.1.1.28"/>
    </reaction>
    <physiologicalReaction direction="left-to-right" evidence="4">
        <dbReference type="Rhea" id="RHEA:18534"/>
    </physiologicalReaction>
</comment>
<comment type="cofactor">
    <cofactor evidence="2">
        <name>pyridoxal 5'-phosphate</name>
        <dbReference type="ChEBI" id="CHEBI:597326"/>
    </cofactor>
</comment>
<comment type="biophysicochemical properties">
    <kinetics>
        <KM evidence="4">200 uM for L-dopa</KM>
        <Vmax evidence="4">5959.0 nmol/min/mg enzyme</Vmax>
    </kinetics>
</comment>
<comment type="pathway">
    <text evidence="4">Catecholamine biosynthesis; dopamine biosynthesis; dopamine from L-tyrosine: step 2/2.</text>
</comment>
<comment type="subunit">
    <text evidence="2">Homodimer.</text>
</comment>
<comment type="similarity">
    <text evidence="6">Belongs to the group II decarboxylase family.</text>
</comment>
<sequence length="486" mass="53936">MNASDFRRRGKEMVDYMADYLEGIEGRQVYPDVQPGYLRPLIPATAPQEPDTFEDILQDVEKIIMPGVTHWHSPYFFAYFPTASSYPAMLADMLCGAIGCIGFSWAASPACTELETVMMDWLGKMLQLPEAFLAGEAGEGGGVIQGSASEATLVALLAARTKVVRRLQAASPGLTQGAVLEKLVAYASDQAHSSVERAGLIGGVKLKAIPSDGKFAMRASALQEALERDKAAGLIPFFVVATLGTTSCCSFDNLLEVGPICHEEDIWLHVDAAYAGSAFICPEFRHLLNGVEFADSFNFNPHKWLLVNFDCSAMWVKRRTDLTGAFKLDPVYLKHSHQGSGLITDYRHWQLPLGRRFRSLKMWFVFRMYGVKGLQAYIRKHVQLSHEFEAFVLQDPRFEVCAEVTLGLVCFRLKGSDGLNEALLERINSARKIHLVPCRLRGQFVLRFAICSRKVESGHVRLAWEHIRGLAAELLAAEEGKAEIKS</sequence>
<protein>
    <recommendedName>
        <fullName>Aromatic-L-amino-acid decarboxylase</fullName>
        <shortName>AADC</shortName>
        <ecNumber evidence="4">4.1.1.28</ecNumber>
    </recommendedName>
    <alternativeName>
        <fullName evidence="5">DOPA decarboxylase</fullName>
        <shortName evidence="5">DDC</shortName>
    </alternativeName>
</protein>
<proteinExistence type="evidence at protein level"/>
<reference key="1">
    <citation type="journal article" date="1996" name="Biochem. J.">
        <title>Cloning and expression of pig kidney dopa decarboxylase: comparison of the naturally occurring and recombinant enzymes.</title>
        <authorList>
            <person name="Moore P.S."/>
            <person name="Dominici P."/>
            <person name="Borri-Voltattorni C."/>
        </authorList>
    </citation>
    <scope>NUCLEOTIDE SEQUENCE [MRNA]</scope>
    <scope>FUNCTION</scope>
    <scope>CATALYTIC ACTIVITY</scope>
    <scope>BIOPHYSICOCHEMICAL PROPERTIES</scope>
</reference>
<reference key="2">
    <citation type="journal article" date="1991" name="Eur. J. Biochem.">
        <title>Pig kidney 3,4-dihydroxyphenylalanine (dopa) decarboxylase. Primary structure and relationships to other amino acid decarboxylases.</title>
        <authorList>
            <person name="Maras B."/>
            <person name="Dominici P."/>
            <person name="Barra D."/>
            <person name="Bossa F."/>
            <person name="Borri-Voltattorni C."/>
        </authorList>
    </citation>
    <scope>PROTEIN SEQUENCE OF 1-485</scope>
    <scope>ACETYLATION AT MET-1</scope>
    <source>
        <tissue>Kidney</tissue>
    </source>
</reference>
<reference key="3">
    <citation type="journal article" date="2001" name="Nat. Struct. Biol.">
        <title>Structural insight into Parkinson's disease treatment from drug-inhibited DOPA decarboxylase.</title>
        <authorList>
            <person name="Burkhard P."/>
            <person name="Dominici P."/>
            <person name="Borri-Voltattorni C."/>
            <person name="Jansonius J.N."/>
            <person name="Malashkevich V.N."/>
        </authorList>
    </citation>
    <scope>X-RAY CRYSTALLOGRAPHY (2.25 ANGSTROMS) IN COMPLEX WITH PYRIDOXAL PHOSPHATE AND CARBIDOPA</scope>
    <scope>COFACTOR</scope>
    <scope>SUBUNIT</scope>
</reference>
<accession>P80041</accession>
<feature type="chain" id="PRO_0000146941" description="Aromatic-L-amino-acid decarboxylase">
    <location>
        <begin position="1"/>
        <end position="486"/>
    </location>
</feature>
<feature type="repeat" description="1">
    <location>
        <begin position="58"/>
        <end position="115"/>
    </location>
</feature>
<feature type="repeat" description="2">
    <location>
        <begin position="118"/>
        <end position="178"/>
    </location>
</feature>
<feature type="region of interest" description="2 X approximate tandem repeats">
    <location>
        <begin position="58"/>
        <end position="178"/>
    </location>
</feature>
<feature type="binding site" evidence="2 7">
    <location>
        <position position="82"/>
    </location>
    <ligand>
        <name>substrate</name>
    </ligand>
</feature>
<feature type="binding site" evidence="1">
    <location>
        <position position="148"/>
    </location>
    <ligand>
        <name>pyridoxal 5'-phosphate</name>
        <dbReference type="ChEBI" id="CHEBI:597326"/>
    </ligand>
</feature>
<feature type="binding site" evidence="1">
    <location>
        <position position="149"/>
    </location>
    <ligand>
        <name>pyridoxal 5'-phosphate</name>
        <dbReference type="ChEBI" id="CHEBI:597326"/>
    </ligand>
</feature>
<feature type="binding site" evidence="2 7">
    <location>
        <position position="192"/>
    </location>
    <ligand>
        <name>substrate</name>
    </ligand>
</feature>
<feature type="binding site" evidence="1">
    <location>
        <position position="246"/>
    </location>
    <ligand>
        <name>pyridoxal 5'-phosphate</name>
        <dbReference type="ChEBI" id="CHEBI:597326"/>
    </ligand>
</feature>
<feature type="binding site" evidence="1">
    <location>
        <position position="300"/>
    </location>
    <ligand>
        <name>pyridoxal 5'-phosphate</name>
        <dbReference type="ChEBI" id="CHEBI:597326"/>
    </ligand>
</feature>
<feature type="modified residue" description="N-acetylmethionine" evidence="3">
    <location>
        <position position="1"/>
    </location>
</feature>
<feature type="modified residue" description="N6-(pyridoxal phosphate)lysine" evidence="2">
    <location>
        <position position="303"/>
    </location>
</feature>
<feature type="helix" evidence="8">
    <location>
        <begin position="3"/>
        <end position="22"/>
    </location>
</feature>
<feature type="helix" evidence="8">
    <location>
        <begin position="24"/>
        <end position="26"/>
    </location>
</feature>
<feature type="helix" evidence="8">
    <location>
        <begin position="39"/>
        <end position="41"/>
    </location>
</feature>
<feature type="helix" evidence="8">
    <location>
        <begin position="53"/>
        <end position="62"/>
    </location>
</feature>
<feature type="helix" evidence="8">
    <location>
        <begin position="65"/>
        <end position="67"/>
    </location>
</feature>
<feature type="strand" evidence="8">
    <location>
        <begin position="78"/>
        <end position="80"/>
    </location>
</feature>
<feature type="helix" evidence="8">
    <location>
        <begin position="86"/>
        <end position="98"/>
    </location>
</feature>
<feature type="helix" evidence="8">
    <location>
        <begin position="105"/>
        <end position="107"/>
    </location>
</feature>
<feature type="helix" evidence="8">
    <location>
        <begin position="109"/>
        <end position="125"/>
    </location>
</feature>
<feature type="helix" evidence="8">
    <location>
        <begin position="130"/>
        <end position="132"/>
    </location>
</feature>
<feature type="turn" evidence="8">
    <location>
        <begin position="135"/>
        <end position="137"/>
    </location>
</feature>
<feature type="strand" evidence="8">
    <location>
        <begin position="141"/>
        <end position="146"/>
    </location>
</feature>
<feature type="helix" evidence="8">
    <location>
        <begin position="148"/>
        <end position="170"/>
    </location>
</feature>
<feature type="helix" evidence="8">
    <location>
        <begin position="176"/>
        <end position="182"/>
    </location>
</feature>
<feature type="strand" evidence="8">
    <location>
        <begin position="183"/>
        <end position="188"/>
    </location>
</feature>
<feature type="helix" evidence="8">
    <location>
        <begin position="193"/>
        <end position="202"/>
    </location>
</feature>
<feature type="strand" evidence="8">
    <location>
        <begin position="205"/>
        <end position="209"/>
    </location>
</feature>
<feature type="helix" evidence="8">
    <location>
        <begin position="219"/>
        <end position="231"/>
    </location>
</feature>
<feature type="strand" evidence="8">
    <location>
        <begin position="235"/>
        <end position="244"/>
    </location>
</feature>
<feature type="turn" evidence="8">
    <location>
        <begin position="246"/>
        <end position="248"/>
    </location>
</feature>
<feature type="helix" evidence="8">
    <location>
        <begin position="254"/>
        <end position="263"/>
    </location>
</feature>
<feature type="strand" evidence="8">
    <location>
        <begin position="267"/>
        <end position="271"/>
    </location>
</feature>
<feature type="helix" evidence="8">
    <location>
        <begin position="275"/>
        <end position="280"/>
    </location>
</feature>
<feature type="turn" evidence="8">
    <location>
        <begin position="282"/>
        <end position="284"/>
    </location>
</feature>
<feature type="helix" evidence="8">
    <location>
        <begin position="285"/>
        <end position="288"/>
    </location>
</feature>
<feature type="helix" evidence="8">
    <location>
        <begin position="291"/>
        <end position="293"/>
    </location>
</feature>
<feature type="strand" evidence="8">
    <location>
        <begin position="295"/>
        <end position="299"/>
    </location>
</feature>
<feature type="helix" evidence="8">
    <location>
        <begin position="301"/>
        <end position="304"/>
    </location>
</feature>
<feature type="strand" evidence="8">
    <location>
        <begin position="312"/>
        <end position="317"/>
    </location>
</feature>
<feature type="helix" evidence="8">
    <location>
        <begin position="319"/>
        <end position="323"/>
    </location>
</feature>
<feature type="helix" evidence="8">
    <location>
        <begin position="324"/>
        <end position="326"/>
    </location>
</feature>
<feature type="helix" evidence="8">
    <location>
        <begin position="346"/>
        <end position="348"/>
    </location>
</feature>
<feature type="strand" evidence="8">
    <location>
        <begin position="349"/>
        <end position="351"/>
    </location>
</feature>
<feature type="helix" evidence="8">
    <location>
        <begin position="359"/>
        <end position="394"/>
    </location>
</feature>
<feature type="strand" evidence="8">
    <location>
        <begin position="398"/>
        <end position="400"/>
    </location>
</feature>
<feature type="strand" evidence="8">
    <location>
        <begin position="406"/>
        <end position="415"/>
    </location>
</feature>
<feature type="helix" evidence="8">
    <location>
        <begin position="417"/>
        <end position="430"/>
    </location>
</feature>
<feature type="strand" evidence="9">
    <location>
        <begin position="432"/>
        <end position="434"/>
    </location>
</feature>
<feature type="strand" evidence="8">
    <location>
        <begin position="436"/>
        <end position="440"/>
    </location>
</feature>
<feature type="strand" evidence="8">
    <location>
        <begin position="443"/>
        <end position="449"/>
    </location>
</feature>
<feature type="helix" evidence="8">
    <location>
        <begin position="457"/>
        <end position="475"/>
    </location>
</feature>
<name>DDC_PIG</name>
<organism>
    <name type="scientific">Sus scrofa</name>
    <name type="common">Pig</name>
    <dbReference type="NCBI Taxonomy" id="9823"/>
    <lineage>
        <taxon>Eukaryota</taxon>
        <taxon>Metazoa</taxon>
        <taxon>Chordata</taxon>
        <taxon>Craniata</taxon>
        <taxon>Vertebrata</taxon>
        <taxon>Euteleostomi</taxon>
        <taxon>Mammalia</taxon>
        <taxon>Eutheria</taxon>
        <taxon>Laurasiatheria</taxon>
        <taxon>Artiodactyla</taxon>
        <taxon>Suina</taxon>
        <taxon>Suidae</taxon>
        <taxon>Sus</taxon>
    </lineage>
</organism>
<dbReference type="EC" id="4.1.1.28" evidence="4"/>
<dbReference type="EMBL" id="S82290">
    <property type="protein sequence ID" value="AAB47157.1"/>
    <property type="molecule type" value="mRNA"/>
</dbReference>
<dbReference type="PIR" id="S17848">
    <property type="entry name" value="S17848"/>
</dbReference>
<dbReference type="RefSeq" id="NP_999019.1">
    <property type="nucleotide sequence ID" value="NM_213854.1"/>
</dbReference>
<dbReference type="PDB" id="1JS3">
    <property type="method" value="X-ray"/>
    <property type="resolution" value="2.25 A"/>
    <property type="chains" value="A/B=1-486"/>
</dbReference>
<dbReference type="PDB" id="1JS6">
    <property type="method" value="X-ray"/>
    <property type="resolution" value="2.60 A"/>
    <property type="chains" value="A/B=1-486"/>
</dbReference>
<dbReference type="PDBsum" id="1JS3"/>
<dbReference type="PDBsum" id="1JS6"/>
<dbReference type="SMR" id="P80041"/>
<dbReference type="FunCoup" id="P80041">
    <property type="interactions" value="140"/>
</dbReference>
<dbReference type="STRING" id="9823.ENSSSCP00000064972"/>
<dbReference type="BindingDB" id="P80041"/>
<dbReference type="ChEMBL" id="CHEMBL2841"/>
<dbReference type="iPTMnet" id="P80041"/>
<dbReference type="PaxDb" id="9823-ENSSSCP00000019955"/>
<dbReference type="PeptideAtlas" id="P80041"/>
<dbReference type="GeneID" id="396857"/>
<dbReference type="CTD" id="1644"/>
<dbReference type="eggNOG" id="KOG0628">
    <property type="taxonomic scope" value="Eukaryota"/>
</dbReference>
<dbReference type="InParanoid" id="P80041"/>
<dbReference type="OrthoDB" id="639767at2759"/>
<dbReference type="BioCyc" id="MetaCyc:MONOMER-14992"/>
<dbReference type="BRENDA" id="4.1.1.28">
    <property type="organism ID" value="6170"/>
</dbReference>
<dbReference type="SABIO-RK" id="P80041"/>
<dbReference type="UniPathway" id="UPA00747">
    <property type="reaction ID" value="UER00734"/>
</dbReference>
<dbReference type="EvolutionaryTrace" id="P80041"/>
<dbReference type="Proteomes" id="UP000008227">
    <property type="component" value="Unplaced"/>
</dbReference>
<dbReference type="Proteomes" id="UP000314985">
    <property type="component" value="Unplaced"/>
</dbReference>
<dbReference type="Proteomes" id="UP000694570">
    <property type="component" value="Unplaced"/>
</dbReference>
<dbReference type="Proteomes" id="UP000694571">
    <property type="component" value="Unplaced"/>
</dbReference>
<dbReference type="Proteomes" id="UP000694720">
    <property type="component" value="Unplaced"/>
</dbReference>
<dbReference type="Proteomes" id="UP000694722">
    <property type="component" value="Unplaced"/>
</dbReference>
<dbReference type="Proteomes" id="UP000694723">
    <property type="component" value="Unplaced"/>
</dbReference>
<dbReference type="Proteomes" id="UP000694724">
    <property type="component" value="Unplaced"/>
</dbReference>
<dbReference type="Proteomes" id="UP000694725">
    <property type="component" value="Unplaced"/>
</dbReference>
<dbReference type="Proteomes" id="UP000694726">
    <property type="component" value="Unplaced"/>
</dbReference>
<dbReference type="Proteomes" id="UP000694727">
    <property type="component" value="Unplaced"/>
</dbReference>
<dbReference type="Proteomes" id="UP000694728">
    <property type="component" value="Unplaced"/>
</dbReference>
<dbReference type="GO" id="GO:0005737">
    <property type="term" value="C:cytoplasm"/>
    <property type="evidence" value="ECO:0000318"/>
    <property type="project" value="GO_Central"/>
</dbReference>
<dbReference type="GO" id="GO:0036467">
    <property type="term" value="F:5-hydroxy-L-tryptophan decarboxylase activity"/>
    <property type="evidence" value="ECO:0007669"/>
    <property type="project" value="RHEA"/>
</dbReference>
<dbReference type="GO" id="GO:0004058">
    <property type="term" value="F:aromatic-L-amino-acid decarboxylase activity"/>
    <property type="evidence" value="ECO:0000318"/>
    <property type="project" value="GO_Central"/>
</dbReference>
<dbReference type="GO" id="GO:0036468">
    <property type="term" value="F:L-dopa decarboxylase activity"/>
    <property type="evidence" value="ECO:0007669"/>
    <property type="project" value="RHEA"/>
</dbReference>
<dbReference type="GO" id="GO:0030170">
    <property type="term" value="F:pyridoxal phosphate binding"/>
    <property type="evidence" value="ECO:0007669"/>
    <property type="project" value="InterPro"/>
</dbReference>
<dbReference type="GO" id="GO:0006520">
    <property type="term" value="P:amino acid metabolic process"/>
    <property type="evidence" value="ECO:0007669"/>
    <property type="project" value="InterPro"/>
</dbReference>
<dbReference type="GO" id="GO:0019752">
    <property type="term" value="P:carboxylic acid metabolic process"/>
    <property type="evidence" value="ECO:0007669"/>
    <property type="project" value="InterPro"/>
</dbReference>
<dbReference type="GO" id="GO:0006584">
    <property type="term" value="P:catecholamine metabolic process"/>
    <property type="evidence" value="ECO:0000318"/>
    <property type="project" value="GO_Central"/>
</dbReference>
<dbReference type="GO" id="GO:0042416">
    <property type="term" value="P:dopamine biosynthetic process"/>
    <property type="evidence" value="ECO:0007669"/>
    <property type="project" value="UniProtKB-UniPathway"/>
</dbReference>
<dbReference type="GO" id="GO:0042427">
    <property type="term" value="P:serotonin biosynthetic process"/>
    <property type="evidence" value="ECO:0000318"/>
    <property type="project" value="GO_Central"/>
</dbReference>
<dbReference type="CDD" id="cd06450">
    <property type="entry name" value="DOPA_deC_like"/>
    <property type="match status" value="1"/>
</dbReference>
<dbReference type="FunFam" id="1.20.1340.10:FF:000001">
    <property type="entry name" value="Histidine decarboxylase"/>
    <property type="match status" value="1"/>
</dbReference>
<dbReference type="FunFam" id="3.40.640.10:FF:000025">
    <property type="entry name" value="Histidine decarboxylase"/>
    <property type="match status" value="1"/>
</dbReference>
<dbReference type="FunFam" id="3.90.1150.10:FF:000018">
    <property type="entry name" value="Histidine decarboxylase"/>
    <property type="match status" value="1"/>
</dbReference>
<dbReference type="Gene3D" id="3.90.1150.10">
    <property type="entry name" value="Aspartate Aminotransferase, domain 1"/>
    <property type="match status" value="1"/>
</dbReference>
<dbReference type="Gene3D" id="1.20.1340.10">
    <property type="entry name" value="dopa decarboxylase, N-terminal domain"/>
    <property type="match status" value="1"/>
</dbReference>
<dbReference type="Gene3D" id="3.40.640.10">
    <property type="entry name" value="Type I PLP-dependent aspartate aminotransferase-like (Major domain)"/>
    <property type="match status" value="1"/>
</dbReference>
<dbReference type="InterPro" id="IPR010977">
    <property type="entry name" value="Aromatic_deC"/>
</dbReference>
<dbReference type="InterPro" id="IPR002129">
    <property type="entry name" value="PyrdxlP-dep_de-COase"/>
</dbReference>
<dbReference type="InterPro" id="IPR015424">
    <property type="entry name" value="PyrdxlP-dep_Trfase"/>
</dbReference>
<dbReference type="InterPro" id="IPR015421">
    <property type="entry name" value="PyrdxlP-dep_Trfase_major"/>
</dbReference>
<dbReference type="InterPro" id="IPR015422">
    <property type="entry name" value="PyrdxlP-dep_Trfase_small"/>
</dbReference>
<dbReference type="InterPro" id="IPR021115">
    <property type="entry name" value="Pyridoxal-P_BS"/>
</dbReference>
<dbReference type="PANTHER" id="PTHR11999:SF167">
    <property type="entry name" value="AROMATIC-L-AMINO-ACID DECARBOXYLASE"/>
    <property type="match status" value="1"/>
</dbReference>
<dbReference type="PANTHER" id="PTHR11999">
    <property type="entry name" value="GROUP II PYRIDOXAL-5-PHOSPHATE DECARBOXYLASE"/>
    <property type="match status" value="1"/>
</dbReference>
<dbReference type="Pfam" id="PF00282">
    <property type="entry name" value="Pyridoxal_deC"/>
    <property type="match status" value="1"/>
</dbReference>
<dbReference type="PRINTS" id="PR00800">
    <property type="entry name" value="YHDCRBOXLASE"/>
</dbReference>
<dbReference type="SUPFAM" id="SSF53383">
    <property type="entry name" value="PLP-dependent transferases"/>
    <property type="match status" value="1"/>
</dbReference>
<dbReference type="PROSITE" id="PS00392">
    <property type="entry name" value="DDC_GAD_HDC_YDC"/>
    <property type="match status" value="1"/>
</dbReference>
<keyword id="KW-0002">3D-structure</keyword>
<keyword id="KW-0007">Acetylation</keyword>
<keyword id="KW-0127">Catecholamine biosynthesis</keyword>
<keyword id="KW-0210">Decarboxylase</keyword>
<keyword id="KW-0903">Direct protein sequencing</keyword>
<keyword id="KW-0456">Lyase</keyword>
<keyword id="KW-0663">Pyridoxal phosphate</keyword>
<keyword id="KW-1185">Reference proteome</keyword>
<keyword id="KW-0677">Repeat</keyword>
<evidence type="ECO:0000250" key="1">
    <source>
        <dbReference type="UniProtKB" id="P20711"/>
    </source>
</evidence>
<evidence type="ECO:0000269" key="2">
    <source>
    </source>
</evidence>
<evidence type="ECO:0000269" key="3">
    <source>
    </source>
</evidence>
<evidence type="ECO:0000269" key="4">
    <source>
    </source>
</evidence>
<evidence type="ECO:0000303" key="5">
    <source>
    </source>
</evidence>
<evidence type="ECO:0000305" key="6"/>
<evidence type="ECO:0007744" key="7">
    <source>
        <dbReference type="PDB" id="1JS3"/>
    </source>
</evidence>
<evidence type="ECO:0007829" key="8">
    <source>
        <dbReference type="PDB" id="1JS3"/>
    </source>
</evidence>
<evidence type="ECO:0007829" key="9">
    <source>
        <dbReference type="PDB" id="1JS6"/>
    </source>
</evidence>